<keyword id="KW-1203">Blood coagulation cascade inhibiting toxin</keyword>
<keyword id="KW-0106">Calcium</keyword>
<keyword id="KW-0903">Direct protein sequencing</keyword>
<keyword id="KW-1015">Disulfide bond</keyword>
<keyword id="KW-1199">Hemostasis impairing toxin</keyword>
<keyword id="KW-0378">Hydrolase</keyword>
<keyword id="KW-0442">Lipid degradation</keyword>
<keyword id="KW-0443">Lipid metabolism</keyword>
<keyword id="KW-0479">Metal-binding</keyword>
<keyword id="KW-0964">Secreted</keyword>
<keyword id="KW-0800">Toxin</keyword>
<protein>
    <recommendedName>
        <fullName>Basic phospholipase A2 Ts-G6D49</fullName>
        <shortName>svPLA2</shortName>
        <ecNumber>3.1.1.4</ecNumber>
    </recommendedName>
    <alternativeName>
        <fullName>Phosphatidylcholine 2-acylhydrolase</fullName>
    </alternativeName>
</protein>
<sequence length="122" mass="13819">SLLEFGRMIKEETGKNPLSSYISYGCYCGWGGQGEPKDDTDRCCFVHDCCYGKLWGCSPKTDIYFYFRKNGAIVCGRGTWCEKQICECDKAAAICFRENLATYKEEYHSYGKSGCTEKSPKC</sequence>
<evidence type="ECO:0000250" key="1"/>
<evidence type="ECO:0000255" key="2">
    <source>
        <dbReference type="PROSITE-ProRule" id="PRU10035"/>
    </source>
</evidence>
<evidence type="ECO:0000255" key="3">
    <source>
        <dbReference type="PROSITE-ProRule" id="PRU10036"/>
    </source>
</evidence>
<evidence type="ECO:0000269" key="4">
    <source>
    </source>
</evidence>
<evidence type="ECO:0000305" key="5"/>
<name>PA2BB_TRIST</name>
<proteinExistence type="evidence at protein level"/>
<reference key="1">
    <citation type="journal article" date="2004" name="Biochem. J.">
        <title>Venom phospholipases A2 of bamboo viper (Trimeresurus stejnegeri): molecular characterization, geographic variations and evidence of multiple ancestries.</title>
        <authorList>
            <person name="Tsai I.-H."/>
            <person name="Wang Y.-M."/>
            <person name="Chen Y.-H."/>
            <person name="Tsai T.-S."/>
            <person name="Tu M.-C."/>
        </authorList>
    </citation>
    <scope>NUCLEOTIDE SEQUENCE [MRNA] OF 6-122</scope>
    <scope>PROTEIN SEQUENCE OF 1-23</scope>
    <scope>FUNCTION</scope>
    <scope>DEVELOPMENTAL STAGE</scope>
    <scope>MASS SPECTROMETRY</scope>
    <source>
        <strain>Taiwan</strain>
        <tissue>Venom</tissue>
        <tissue>Venom gland</tissue>
    </source>
</reference>
<accession>Q6H3C5</accession>
<comment type="function">
    <text evidence="4">Snake venom phospholipase A2 that induces fast and sustaining local edema a few hours after injection (5-10 ug) in the hind paw, and prolongs the coagulation time of human plasma. Exhibits moderate hydrolytic activities and prefers the zwitterionic micelles (dPPC with Triton X-100) to the anionic micelles (dPPC with deoxycholate). PLA2 catalyzes the calcium-dependent hydrolysis of the 2-acyl groups in 3-sn-phosphoglycerides.</text>
</comment>
<comment type="catalytic activity">
    <reaction evidence="2 3">
        <text>a 1,2-diacyl-sn-glycero-3-phosphocholine + H2O = a 1-acyl-sn-glycero-3-phosphocholine + a fatty acid + H(+)</text>
        <dbReference type="Rhea" id="RHEA:15801"/>
        <dbReference type="ChEBI" id="CHEBI:15377"/>
        <dbReference type="ChEBI" id="CHEBI:15378"/>
        <dbReference type="ChEBI" id="CHEBI:28868"/>
        <dbReference type="ChEBI" id="CHEBI:57643"/>
        <dbReference type="ChEBI" id="CHEBI:58168"/>
        <dbReference type="EC" id="3.1.1.4"/>
    </reaction>
</comment>
<comment type="cofactor">
    <cofactor evidence="1">
        <name>Ca(2+)</name>
        <dbReference type="ChEBI" id="CHEBI:29108"/>
    </cofactor>
    <text evidence="1">Binds 1 Ca(2+) ion.</text>
</comment>
<comment type="subcellular location">
    <subcellularLocation>
        <location>Secreted</location>
    </subcellularLocation>
</comment>
<comment type="tissue specificity">
    <text>Expressed by the venom gland.</text>
</comment>
<comment type="developmental stage">
    <text evidence="4">Is expressed more abundantly in adult than in juvenile vipers.</text>
</comment>
<comment type="mass spectrometry" mass="13805.0" method="Electrospray" evidence="4"/>
<comment type="similarity">
    <text evidence="5">Belongs to the phospholipase A2 family. Group II subfamily. D49 sub-subfamily.</text>
</comment>
<organism>
    <name type="scientific">Trimeresurus stejnegeri</name>
    <name type="common">Chinese green tree viper</name>
    <name type="synonym">Viridovipera stejnegeri</name>
    <dbReference type="NCBI Taxonomy" id="39682"/>
    <lineage>
        <taxon>Eukaryota</taxon>
        <taxon>Metazoa</taxon>
        <taxon>Chordata</taxon>
        <taxon>Craniata</taxon>
        <taxon>Vertebrata</taxon>
        <taxon>Euteleostomi</taxon>
        <taxon>Lepidosauria</taxon>
        <taxon>Squamata</taxon>
        <taxon>Bifurcata</taxon>
        <taxon>Unidentata</taxon>
        <taxon>Episquamata</taxon>
        <taxon>Toxicofera</taxon>
        <taxon>Serpentes</taxon>
        <taxon>Colubroidea</taxon>
        <taxon>Viperidae</taxon>
        <taxon>Crotalinae</taxon>
        <taxon>Trimeresurus</taxon>
    </lineage>
</organism>
<feature type="chain" id="PRO_0000419075" description="Basic phospholipase A2 Ts-G6D49">
    <location>
        <begin position="1"/>
        <end position="122"/>
    </location>
</feature>
<feature type="active site" evidence="1">
    <location>
        <position position="47"/>
    </location>
</feature>
<feature type="active site" evidence="1">
    <location>
        <position position="89"/>
    </location>
</feature>
<feature type="binding site" evidence="1">
    <location>
        <position position="27"/>
    </location>
    <ligand>
        <name>Ca(2+)</name>
        <dbReference type="ChEBI" id="CHEBI:29108"/>
    </ligand>
</feature>
<feature type="binding site" evidence="1">
    <location>
        <position position="29"/>
    </location>
    <ligand>
        <name>Ca(2+)</name>
        <dbReference type="ChEBI" id="CHEBI:29108"/>
    </ligand>
</feature>
<feature type="binding site" evidence="1">
    <location>
        <position position="31"/>
    </location>
    <ligand>
        <name>Ca(2+)</name>
        <dbReference type="ChEBI" id="CHEBI:29108"/>
    </ligand>
</feature>
<feature type="binding site" evidence="1">
    <location>
        <position position="48"/>
    </location>
    <ligand>
        <name>Ca(2+)</name>
        <dbReference type="ChEBI" id="CHEBI:29108"/>
    </ligand>
</feature>
<feature type="disulfide bond" evidence="1">
    <location>
        <begin position="26"/>
        <end position="115"/>
    </location>
</feature>
<feature type="disulfide bond" evidence="1">
    <location>
        <begin position="28"/>
        <end position="44"/>
    </location>
</feature>
<feature type="disulfide bond" evidence="1">
    <location>
        <begin position="43"/>
        <end position="95"/>
    </location>
</feature>
<feature type="disulfide bond" evidence="1">
    <location>
        <begin position="49"/>
        <end position="122"/>
    </location>
</feature>
<feature type="disulfide bond" evidence="1">
    <location>
        <begin position="50"/>
        <end position="88"/>
    </location>
</feature>
<feature type="disulfide bond" evidence="1">
    <location>
        <begin position="57"/>
        <end position="81"/>
    </location>
</feature>
<feature type="disulfide bond" evidence="1">
    <location>
        <begin position="75"/>
        <end position="86"/>
    </location>
</feature>
<feature type="sequence conflict" description="In Ref. 1; AA sequence." evidence="5" ref="1">
    <original>I</original>
    <variation>F</variation>
    <location>
        <position position="22"/>
    </location>
</feature>
<dbReference type="EC" id="3.1.1.4"/>
<dbReference type="EMBL" id="AY211944">
    <property type="protein sequence ID" value="AAP48902.1"/>
    <property type="molecule type" value="mRNA"/>
</dbReference>
<dbReference type="SMR" id="Q6H3C5"/>
<dbReference type="GO" id="GO:0005576">
    <property type="term" value="C:extracellular region"/>
    <property type="evidence" value="ECO:0007669"/>
    <property type="project" value="UniProtKB-SubCell"/>
</dbReference>
<dbReference type="GO" id="GO:0005509">
    <property type="term" value="F:calcium ion binding"/>
    <property type="evidence" value="ECO:0007669"/>
    <property type="project" value="InterPro"/>
</dbReference>
<dbReference type="GO" id="GO:0047498">
    <property type="term" value="F:calcium-dependent phospholipase A2 activity"/>
    <property type="evidence" value="ECO:0007669"/>
    <property type="project" value="TreeGrafter"/>
</dbReference>
<dbReference type="GO" id="GO:0005543">
    <property type="term" value="F:phospholipid binding"/>
    <property type="evidence" value="ECO:0007669"/>
    <property type="project" value="TreeGrafter"/>
</dbReference>
<dbReference type="GO" id="GO:0090729">
    <property type="term" value="F:toxin activity"/>
    <property type="evidence" value="ECO:0007669"/>
    <property type="project" value="UniProtKB-KW"/>
</dbReference>
<dbReference type="GO" id="GO:0050482">
    <property type="term" value="P:arachidonate secretion"/>
    <property type="evidence" value="ECO:0007669"/>
    <property type="project" value="InterPro"/>
</dbReference>
<dbReference type="GO" id="GO:0016042">
    <property type="term" value="P:lipid catabolic process"/>
    <property type="evidence" value="ECO:0007669"/>
    <property type="project" value="UniProtKB-KW"/>
</dbReference>
<dbReference type="GO" id="GO:0042130">
    <property type="term" value="P:negative regulation of T cell proliferation"/>
    <property type="evidence" value="ECO:0007669"/>
    <property type="project" value="TreeGrafter"/>
</dbReference>
<dbReference type="GO" id="GO:0006644">
    <property type="term" value="P:phospholipid metabolic process"/>
    <property type="evidence" value="ECO:0007669"/>
    <property type="project" value="InterPro"/>
</dbReference>
<dbReference type="CDD" id="cd00125">
    <property type="entry name" value="PLA2c"/>
    <property type="match status" value="1"/>
</dbReference>
<dbReference type="FunFam" id="1.20.90.10:FF:000001">
    <property type="entry name" value="Basic phospholipase A2 homolog"/>
    <property type="match status" value="1"/>
</dbReference>
<dbReference type="Gene3D" id="1.20.90.10">
    <property type="entry name" value="Phospholipase A2 domain"/>
    <property type="match status" value="1"/>
</dbReference>
<dbReference type="InterPro" id="IPR001211">
    <property type="entry name" value="PLipase_A2"/>
</dbReference>
<dbReference type="InterPro" id="IPR033112">
    <property type="entry name" value="PLipase_A2_Asp_AS"/>
</dbReference>
<dbReference type="InterPro" id="IPR016090">
    <property type="entry name" value="PLipase_A2_dom"/>
</dbReference>
<dbReference type="InterPro" id="IPR036444">
    <property type="entry name" value="PLipase_A2_dom_sf"/>
</dbReference>
<dbReference type="InterPro" id="IPR033113">
    <property type="entry name" value="PLipase_A2_His_AS"/>
</dbReference>
<dbReference type="PANTHER" id="PTHR11716">
    <property type="entry name" value="PHOSPHOLIPASE A2 FAMILY MEMBER"/>
    <property type="match status" value="1"/>
</dbReference>
<dbReference type="PANTHER" id="PTHR11716:SF9">
    <property type="entry name" value="PHOSPHOLIPASE A2, MEMBRANE ASSOCIATED"/>
    <property type="match status" value="1"/>
</dbReference>
<dbReference type="Pfam" id="PF00068">
    <property type="entry name" value="Phospholip_A2_1"/>
    <property type="match status" value="1"/>
</dbReference>
<dbReference type="PRINTS" id="PR00389">
    <property type="entry name" value="PHPHLIPASEA2"/>
</dbReference>
<dbReference type="SMART" id="SM00085">
    <property type="entry name" value="PA2c"/>
    <property type="match status" value="1"/>
</dbReference>
<dbReference type="SUPFAM" id="SSF48619">
    <property type="entry name" value="Phospholipase A2, PLA2"/>
    <property type="match status" value="1"/>
</dbReference>
<dbReference type="PROSITE" id="PS00119">
    <property type="entry name" value="PA2_ASP"/>
    <property type="match status" value="1"/>
</dbReference>
<dbReference type="PROSITE" id="PS00118">
    <property type="entry name" value="PA2_HIS"/>
    <property type="match status" value="1"/>
</dbReference>